<sequence>MSFYNHKEIEPKWQGYWAEHHTFKTGTDASKPKFYALDMFPYPSGVGLHVGHPEGYTATDILSRYKRAQGYNVLHPMGWDAFGLPAEQYAMDTGNDPAEFTAENIANFKRQINALGFSYDWDREVNTTDPNYYKWTQWIFTKLYEKGLAYEAEVPVNWVEELGTAIANEEVLPDGTSERGGYPVVRKPMRQWMLKITAYAERLLNDLDELDWSESIKDMQRNWIGKSTGANVTFKVKGTDKEFTVFTTRPDTLFGATFTVLAPEHELVDAITSSEQAEAVADYKHQASLKSDLVRTDLAKEKTGVWTGAYAINPVNGKEMPIWIADYVLASYGTGAVMAVPAHDQRDWEFAKQFDLPIVEVLEGGNVEEAAYTEDGLHVNSDFLDGLNKEDAIAKIVACLEEKGCGQEKVTYRLRDWLFSRQRYWGEPIPIIHWEDGTSTAVPETELPLVLPVTKDIRPSGTGESPLANLTDWLEVTREDGVKGRRETNTMPQWAGSSWYYLRYIDPHNTEKLADEDLLKQWLPVDIYVGGAEHAVLHLLYARFWHKFLYDLGVVPTKEPFQKLFNQGMILGTSYRDHRGALVATDKVEKRDGSFFHIETGEELEQAPAKMSKSLKNVVNPDDVVEQYGADTLRVYEMFMGPLDASIAWSEEGLEGSRKFLDRVYRLITSKEILAENNGALDKAYNETVKAVTEQIESLKFNTAIAQLMVFVNAANKEDKLYVDYAKGFIQLIAPFAPHLAEELWQTVAETGESISYVAWPTWDESKLVEDEIEIVVQIKGKVRAKLMVAKDLSREELQEIALADEKVKAEIDGKEIVKVISVPNKLVNIVVK</sequence>
<proteinExistence type="inferred from homology"/>
<evidence type="ECO:0000255" key="1">
    <source>
        <dbReference type="HAMAP-Rule" id="MF_00049"/>
    </source>
</evidence>
<keyword id="KW-0030">Aminoacyl-tRNA synthetase</keyword>
<keyword id="KW-0067">ATP-binding</keyword>
<keyword id="KW-0963">Cytoplasm</keyword>
<keyword id="KW-0436">Ligase</keyword>
<keyword id="KW-0547">Nucleotide-binding</keyword>
<keyword id="KW-0648">Protein biosynthesis</keyword>
<keyword id="KW-1185">Reference proteome</keyword>
<reference key="1">
    <citation type="journal article" date="2007" name="J. Bacteriol.">
        <title>Genome sequence of Avery's virulent serotype 2 strain D39 of Streptococcus pneumoniae and comparison with that of unencapsulated laboratory strain R6.</title>
        <authorList>
            <person name="Lanie J.A."/>
            <person name="Ng W.-L."/>
            <person name="Kazmierczak K.M."/>
            <person name="Andrzejewski T.M."/>
            <person name="Davidsen T.M."/>
            <person name="Wayne K.J."/>
            <person name="Tettelin H."/>
            <person name="Glass J.I."/>
            <person name="Winkler M.E."/>
        </authorList>
    </citation>
    <scope>NUCLEOTIDE SEQUENCE [LARGE SCALE GENOMIC DNA]</scope>
    <source>
        <strain>D39 / NCTC 7466</strain>
    </source>
</reference>
<name>SYL_STRP2</name>
<organism>
    <name type="scientific">Streptococcus pneumoniae serotype 2 (strain D39 / NCTC 7466)</name>
    <dbReference type="NCBI Taxonomy" id="373153"/>
    <lineage>
        <taxon>Bacteria</taxon>
        <taxon>Bacillati</taxon>
        <taxon>Bacillota</taxon>
        <taxon>Bacilli</taxon>
        <taxon>Lactobacillales</taxon>
        <taxon>Streptococcaceae</taxon>
        <taxon>Streptococcus</taxon>
    </lineage>
</organism>
<gene>
    <name evidence="1" type="primary">leuS</name>
    <name type="ordered locus">SPD_0238</name>
</gene>
<feature type="chain" id="PRO_1000009443" description="Leucine--tRNA ligase">
    <location>
        <begin position="1"/>
        <end position="833"/>
    </location>
</feature>
<feature type="short sequence motif" description="'HIGH' region">
    <location>
        <begin position="41"/>
        <end position="52"/>
    </location>
</feature>
<feature type="short sequence motif" description="'KMSKS' region">
    <location>
        <begin position="610"/>
        <end position="614"/>
    </location>
</feature>
<feature type="binding site" evidence="1">
    <location>
        <position position="613"/>
    </location>
    <ligand>
        <name>ATP</name>
        <dbReference type="ChEBI" id="CHEBI:30616"/>
    </ligand>
</feature>
<protein>
    <recommendedName>
        <fullName evidence="1">Leucine--tRNA ligase</fullName>
        <ecNumber evidence="1">6.1.1.4</ecNumber>
    </recommendedName>
    <alternativeName>
        <fullName evidence="1">Leucyl-tRNA synthetase</fullName>
        <shortName evidence="1">LeuRS</shortName>
    </alternativeName>
</protein>
<accession>Q04MJ2</accession>
<dbReference type="EC" id="6.1.1.4" evidence="1"/>
<dbReference type="EMBL" id="CP000410">
    <property type="protein sequence ID" value="ABJ55501.1"/>
    <property type="molecule type" value="Genomic_DNA"/>
</dbReference>
<dbReference type="RefSeq" id="WP_000011789.1">
    <property type="nucleotide sequence ID" value="NZ_JAMLJR010000002.1"/>
</dbReference>
<dbReference type="SMR" id="Q04MJ2"/>
<dbReference type="PaxDb" id="373153-SPD_0238"/>
<dbReference type="KEGG" id="spd:SPD_0238"/>
<dbReference type="eggNOG" id="COG0495">
    <property type="taxonomic scope" value="Bacteria"/>
</dbReference>
<dbReference type="HOGENOM" id="CLU_004427_0_0_9"/>
<dbReference type="BioCyc" id="SPNE373153:G1G6V-261-MONOMER"/>
<dbReference type="Proteomes" id="UP000001452">
    <property type="component" value="Chromosome"/>
</dbReference>
<dbReference type="GO" id="GO:0005829">
    <property type="term" value="C:cytosol"/>
    <property type="evidence" value="ECO:0007669"/>
    <property type="project" value="TreeGrafter"/>
</dbReference>
<dbReference type="GO" id="GO:0002161">
    <property type="term" value="F:aminoacyl-tRNA deacylase activity"/>
    <property type="evidence" value="ECO:0007669"/>
    <property type="project" value="InterPro"/>
</dbReference>
<dbReference type="GO" id="GO:0005524">
    <property type="term" value="F:ATP binding"/>
    <property type="evidence" value="ECO:0007669"/>
    <property type="project" value="UniProtKB-UniRule"/>
</dbReference>
<dbReference type="GO" id="GO:0004823">
    <property type="term" value="F:leucine-tRNA ligase activity"/>
    <property type="evidence" value="ECO:0007669"/>
    <property type="project" value="UniProtKB-UniRule"/>
</dbReference>
<dbReference type="GO" id="GO:0006429">
    <property type="term" value="P:leucyl-tRNA aminoacylation"/>
    <property type="evidence" value="ECO:0007669"/>
    <property type="project" value="UniProtKB-UniRule"/>
</dbReference>
<dbReference type="CDD" id="cd07958">
    <property type="entry name" value="Anticodon_Ia_Leu_BEm"/>
    <property type="match status" value="1"/>
</dbReference>
<dbReference type="CDD" id="cd00812">
    <property type="entry name" value="LeuRS_core"/>
    <property type="match status" value="1"/>
</dbReference>
<dbReference type="FunFam" id="1.10.730.10:FF:000012">
    <property type="entry name" value="Leucine--tRNA ligase"/>
    <property type="match status" value="1"/>
</dbReference>
<dbReference type="FunFam" id="3.40.50.620:FF:000056">
    <property type="entry name" value="Leucine--tRNA ligase"/>
    <property type="match status" value="1"/>
</dbReference>
<dbReference type="FunFam" id="3.40.50.620:FF:000077">
    <property type="entry name" value="Leucine--tRNA ligase"/>
    <property type="match status" value="1"/>
</dbReference>
<dbReference type="FunFam" id="1.10.730.10:FF:000011">
    <property type="entry name" value="Leucine--tRNA ligase chloroplastic/mitochondrial"/>
    <property type="match status" value="1"/>
</dbReference>
<dbReference type="Gene3D" id="3.40.50.620">
    <property type="entry name" value="HUPs"/>
    <property type="match status" value="2"/>
</dbReference>
<dbReference type="Gene3D" id="1.10.730.10">
    <property type="entry name" value="Isoleucyl-tRNA Synthetase, Domain 1"/>
    <property type="match status" value="1"/>
</dbReference>
<dbReference type="Gene3D" id="3.90.740.10">
    <property type="entry name" value="Valyl/Leucyl/Isoleucyl-tRNA synthetase, editing domain"/>
    <property type="match status" value="1"/>
</dbReference>
<dbReference type="HAMAP" id="MF_00049_B">
    <property type="entry name" value="Leu_tRNA_synth_B"/>
    <property type="match status" value="1"/>
</dbReference>
<dbReference type="InterPro" id="IPR002300">
    <property type="entry name" value="aa-tRNA-synth_Ia"/>
</dbReference>
<dbReference type="InterPro" id="IPR002302">
    <property type="entry name" value="Leu-tRNA-ligase"/>
</dbReference>
<dbReference type="InterPro" id="IPR025709">
    <property type="entry name" value="Leu_tRNA-synth_edit"/>
</dbReference>
<dbReference type="InterPro" id="IPR013155">
    <property type="entry name" value="M/V/L/I-tRNA-synth_anticd-bd"/>
</dbReference>
<dbReference type="InterPro" id="IPR015413">
    <property type="entry name" value="Methionyl/Leucyl_tRNA_Synth"/>
</dbReference>
<dbReference type="InterPro" id="IPR014729">
    <property type="entry name" value="Rossmann-like_a/b/a_fold"/>
</dbReference>
<dbReference type="InterPro" id="IPR009080">
    <property type="entry name" value="tRNAsynth_Ia_anticodon-bd"/>
</dbReference>
<dbReference type="InterPro" id="IPR009008">
    <property type="entry name" value="Val/Leu/Ile-tRNA-synth_edit"/>
</dbReference>
<dbReference type="NCBIfam" id="TIGR00396">
    <property type="entry name" value="leuS_bact"/>
    <property type="match status" value="1"/>
</dbReference>
<dbReference type="PANTHER" id="PTHR43740:SF2">
    <property type="entry name" value="LEUCINE--TRNA LIGASE, MITOCHONDRIAL"/>
    <property type="match status" value="1"/>
</dbReference>
<dbReference type="PANTHER" id="PTHR43740">
    <property type="entry name" value="LEUCYL-TRNA SYNTHETASE"/>
    <property type="match status" value="1"/>
</dbReference>
<dbReference type="Pfam" id="PF08264">
    <property type="entry name" value="Anticodon_1"/>
    <property type="match status" value="1"/>
</dbReference>
<dbReference type="Pfam" id="PF00133">
    <property type="entry name" value="tRNA-synt_1"/>
    <property type="match status" value="2"/>
</dbReference>
<dbReference type="Pfam" id="PF13603">
    <property type="entry name" value="tRNA-synt_1_2"/>
    <property type="match status" value="1"/>
</dbReference>
<dbReference type="Pfam" id="PF09334">
    <property type="entry name" value="tRNA-synt_1g"/>
    <property type="match status" value="1"/>
</dbReference>
<dbReference type="PRINTS" id="PR00985">
    <property type="entry name" value="TRNASYNTHLEU"/>
</dbReference>
<dbReference type="SUPFAM" id="SSF47323">
    <property type="entry name" value="Anticodon-binding domain of a subclass of class I aminoacyl-tRNA synthetases"/>
    <property type="match status" value="1"/>
</dbReference>
<dbReference type="SUPFAM" id="SSF52374">
    <property type="entry name" value="Nucleotidylyl transferase"/>
    <property type="match status" value="1"/>
</dbReference>
<dbReference type="SUPFAM" id="SSF50677">
    <property type="entry name" value="ValRS/IleRS/LeuRS editing domain"/>
    <property type="match status" value="1"/>
</dbReference>
<comment type="catalytic activity">
    <reaction evidence="1">
        <text>tRNA(Leu) + L-leucine + ATP = L-leucyl-tRNA(Leu) + AMP + diphosphate</text>
        <dbReference type="Rhea" id="RHEA:11688"/>
        <dbReference type="Rhea" id="RHEA-COMP:9613"/>
        <dbReference type="Rhea" id="RHEA-COMP:9622"/>
        <dbReference type="ChEBI" id="CHEBI:30616"/>
        <dbReference type="ChEBI" id="CHEBI:33019"/>
        <dbReference type="ChEBI" id="CHEBI:57427"/>
        <dbReference type="ChEBI" id="CHEBI:78442"/>
        <dbReference type="ChEBI" id="CHEBI:78494"/>
        <dbReference type="ChEBI" id="CHEBI:456215"/>
        <dbReference type="EC" id="6.1.1.4"/>
    </reaction>
</comment>
<comment type="subcellular location">
    <subcellularLocation>
        <location evidence="1">Cytoplasm</location>
    </subcellularLocation>
</comment>
<comment type="similarity">
    <text evidence="1">Belongs to the class-I aminoacyl-tRNA synthetase family.</text>
</comment>